<proteinExistence type="predicted"/>
<comment type="subcellular location">
    <subcellularLocation>
        <location evidence="1">Cytoplasm</location>
    </subcellularLocation>
    <subcellularLocation>
        <location evidence="1">Nucleus</location>
    </subcellularLocation>
</comment>
<organism>
    <name type="scientific">Schizosaccharomyces pombe (strain 972 / ATCC 24843)</name>
    <name type="common">Fission yeast</name>
    <dbReference type="NCBI Taxonomy" id="284812"/>
    <lineage>
        <taxon>Eukaryota</taxon>
        <taxon>Fungi</taxon>
        <taxon>Dikarya</taxon>
        <taxon>Ascomycota</taxon>
        <taxon>Taphrinomycotina</taxon>
        <taxon>Schizosaccharomycetes</taxon>
        <taxon>Schizosaccharomycetales</taxon>
        <taxon>Schizosaccharomycetaceae</taxon>
        <taxon>Schizosaccharomyces</taxon>
    </lineage>
</organism>
<gene>
    <name type="ORF">SPAC10F6.04</name>
</gene>
<sequence>MLLSLGSNGNFQLGLNNDEDVYSPQIVPFDRAIEKISCGGNHTLLLDEDSQLWACGDNRKGQCGYEVKEPLYNPLSPDYLRIFTRVSHERWVFLTCGWEFSVIVHADRRRVCSCGEGLSGELGQGNRSNSQGLREIDIPYLDDKEFIIDISAGLRHWICVTNEGNLYGCGDGRKGQLGPVVMKTVNKVSFLGRIEHAQAVVCGVQFSAVLQETGHVIVLGGEKWNVAAECDAWQANNSELSSSICSISANWSTLSLLSTEGCVYAFGRCDRAQKAHTKASDIVQIASGTEHNILRTKKGSVLIYGWNEHGNASNDDKRDVYDAKTLQLPGWAYIVAAGYATSWIVIEENHK</sequence>
<feature type="chain" id="PRO_0000341579" description="RCC1 repeat-containing protein C10F6.04">
    <location>
        <begin position="1"/>
        <end position="351"/>
    </location>
</feature>
<feature type="repeat" description="RCC1 1">
    <location>
        <begin position="1"/>
        <end position="48"/>
    </location>
</feature>
<feature type="repeat" description="RCC1 2">
    <location>
        <begin position="50"/>
        <end position="106"/>
    </location>
</feature>
<feature type="repeat" description="RCC1 3">
    <location>
        <begin position="108"/>
        <end position="162"/>
    </location>
</feature>
<feature type="repeat" description="RCC1 4">
    <location>
        <begin position="163"/>
        <end position="212"/>
    </location>
</feature>
<evidence type="ECO:0000269" key="1">
    <source>
    </source>
</evidence>
<accession>O42645</accession>
<protein>
    <recommendedName>
        <fullName>RCC1 repeat-containing protein C10F6.04</fullName>
    </recommendedName>
</protein>
<reference key="1">
    <citation type="journal article" date="2002" name="Nature">
        <title>The genome sequence of Schizosaccharomyces pombe.</title>
        <authorList>
            <person name="Wood V."/>
            <person name="Gwilliam R."/>
            <person name="Rajandream M.A."/>
            <person name="Lyne M.H."/>
            <person name="Lyne R."/>
            <person name="Stewart A."/>
            <person name="Sgouros J.G."/>
            <person name="Peat N."/>
            <person name="Hayles J."/>
            <person name="Baker S.G."/>
            <person name="Basham D."/>
            <person name="Bowman S."/>
            <person name="Brooks K."/>
            <person name="Brown D."/>
            <person name="Brown S."/>
            <person name="Chillingworth T."/>
            <person name="Churcher C.M."/>
            <person name="Collins M."/>
            <person name="Connor R."/>
            <person name="Cronin A."/>
            <person name="Davis P."/>
            <person name="Feltwell T."/>
            <person name="Fraser A."/>
            <person name="Gentles S."/>
            <person name="Goble A."/>
            <person name="Hamlin N."/>
            <person name="Harris D.E."/>
            <person name="Hidalgo J."/>
            <person name="Hodgson G."/>
            <person name="Holroyd S."/>
            <person name="Hornsby T."/>
            <person name="Howarth S."/>
            <person name="Huckle E.J."/>
            <person name="Hunt S."/>
            <person name="Jagels K."/>
            <person name="James K.D."/>
            <person name="Jones L."/>
            <person name="Jones M."/>
            <person name="Leather S."/>
            <person name="McDonald S."/>
            <person name="McLean J."/>
            <person name="Mooney P."/>
            <person name="Moule S."/>
            <person name="Mungall K.L."/>
            <person name="Murphy L.D."/>
            <person name="Niblett D."/>
            <person name="Odell C."/>
            <person name="Oliver K."/>
            <person name="O'Neil S."/>
            <person name="Pearson D."/>
            <person name="Quail M.A."/>
            <person name="Rabbinowitsch E."/>
            <person name="Rutherford K.M."/>
            <person name="Rutter S."/>
            <person name="Saunders D."/>
            <person name="Seeger K."/>
            <person name="Sharp S."/>
            <person name="Skelton J."/>
            <person name="Simmonds M.N."/>
            <person name="Squares R."/>
            <person name="Squares S."/>
            <person name="Stevens K."/>
            <person name="Taylor K."/>
            <person name="Taylor R.G."/>
            <person name="Tivey A."/>
            <person name="Walsh S.V."/>
            <person name="Warren T."/>
            <person name="Whitehead S."/>
            <person name="Woodward J.R."/>
            <person name="Volckaert G."/>
            <person name="Aert R."/>
            <person name="Robben J."/>
            <person name="Grymonprez B."/>
            <person name="Weltjens I."/>
            <person name="Vanstreels E."/>
            <person name="Rieger M."/>
            <person name="Schaefer M."/>
            <person name="Mueller-Auer S."/>
            <person name="Gabel C."/>
            <person name="Fuchs M."/>
            <person name="Duesterhoeft A."/>
            <person name="Fritzc C."/>
            <person name="Holzer E."/>
            <person name="Moestl D."/>
            <person name="Hilbert H."/>
            <person name="Borzym K."/>
            <person name="Langer I."/>
            <person name="Beck A."/>
            <person name="Lehrach H."/>
            <person name="Reinhardt R."/>
            <person name="Pohl T.M."/>
            <person name="Eger P."/>
            <person name="Zimmermann W."/>
            <person name="Wedler H."/>
            <person name="Wambutt R."/>
            <person name="Purnelle B."/>
            <person name="Goffeau A."/>
            <person name="Cadieu E."/>
            <person name="Dreano S."/>
            <person name="Gloux S."/>
            <person name="Lelaure V."/>
            <person name="Mottier S."/>
            <person name="Galibert F."/>
            <person name="Aves S.J."/>
            <person name="Xiang Z."/>
            <person name="Hunt C."/>
            <person name="Moore K."/>
            <person name="Hurst S.M."/>
            <person name="Lucas M."/>
            <person name="Rochet M."/>
            <person name="Gaillardin C."/>
            <person name="Tallada V.A."/>
            <person name="Garzon A."/>
            <person name="Thode G."/>
            <person name="Daga R.R."/>
            <person name="Cruzado L."/>
            <person name="Jimenez J."/>
            <person name="Sanchez M."/>
            <person name="del Rey F."/>
            <person name="Benito J."/>
            <person name="Dominguez A."/>
            <person name="Revuelta J.L."/>
            <person name="Moreno S."/>
            <person name="Armstrong J."/>
            <person name="Forsburg S.L."/>
            <person name="Cerutti L."/>
            <person name="Lowe T."/>
            <person name="McCombie W.R."/>
            <person name="Paulsen I."/>
            <person name="Potashkin J."/>
            <person name="Shpakovski G.V."/>
            <person name="Ussery D."/>
            <person name="Barrell B.G."/>
            <person name="Nurse P."/>
        </authorList>
    </citation>
    <scope>NUCLEOTIDE SEQUENCE [LARGE SCALE GENOMIC DNA]</scope>
    <source>
        <strain>972 / ATCC 24843</strain>
    </source>
</reference>
<reference key="2">
    <citation type="journal article" date="2006" name="Nat. Biotechnol.">
        <title>ORFeome cloning and global analysis of protein localization in the fission yeast Schizosaccharomyces pombe.</title>
        <authorList>
            <person name="Matsuyama A."/>
            <person name="Arai R."/>
            <person name="Yashiroda Y."/>
            <person name="Shirai A."/>
            <person name="Kamata A."/>
            <person name="Sekido S."/>
            <person name="Kobayashi Y."/>
            <person name="Hashimoto A."/>
            <person name="Hamamoto M."/>
            <person name="Hiraoka Y."/>
            <person name="Horinouchi S."/>
            <person name="Yoshida M."/>
        </authorList>
    </citation>
    <scope>SUBCELLULAR LOCATION [LARGE SCALE ANALYSIS]</scope>
</reference>
<name>YF94_SCHPO</name>
<dbReference type="EMBL" id="CU329670">
    <property type="protein sequence ID" value="CAA15717.1"/>
    <property type="molecule type" value="Genomic_DNA"/>
</dbReference>
<dbReference type="PIR" id="T37498">
    <property type="entry name" value="T37498"/>
</dbReference>
<dbReference type="RefSeq" id="NP_593255.1">
    <property type="nucleotide sequence ID" value="NM_001018652.2"/>
</dbReference>
<dbReference type="SMR" id="O42645"/>
<dbReference type="BioGRID" id="279412">
    <property type="interactions" value="24"/>
</dbReference>
<dbReference type="FunCoup" id="O42645">
    <property type="interactions" value="37"/>
</dbReference>
<dbReference type="STRING" id="284812.O42645"/>
<dbReference type="PaxDb" id="4896-SPAC10F6.04.1"/>
<dbReference type="EnsemblFungi" id="SPAC10F6.04.1">
    <property type="protein sequence ID" value="SPAC10F6.04.1:pep"/>
    <property type="gene ID" value="SPAC10F6.04"/>
</dbReference>
<dbReference type="PomBase" id="SPAC10F6.04"/>
<dbReference type="VEuPathDB" id="FungiDB:SPAC10F6.04"/>
<dbReference type="eggNOG" id="KOG1426">
    <property type="taxonomic scope" value="Eukaryota"/>
</dbReference>
<dbReference type="HOGENOM" id="CLU_005210_0_0_1"/>
<dbReference type="InParanoid" id="O42645"/>
<dbReference type="OMA" id="GWGNCRK"/>
<dbReference type="PhylomeDB" id="O42645"/>
<dbReference type="PRO" id="PR:O42645"/>
<dbReference type="Proteomes" id="UP000002485">
    <property type="component" value="Chromosome I"/>
</dbReference>
<dbReference type="GO" id="GO:0005829">
    <property type="term" value="C:cytosol"/>
    <property type="evidence" value="ECO:0007005"/>
    <property type="project" value="PomBase"/>
</dbReference>
<dbReference type="GO" id="GO:0005634">
    <property type="term" value="C:nucleus"/>
    <property type="evidence" value="ECO:0007005"/>
    <property type="project" value="PomBase"/>
</dbReference>
<dbReference type="GO" id="GO:0002098">
    <property type="term" value="P:tRNA wobble uridine modification"/>
    <property type="evidence" value="ECO:0000266"/>
    <property type="project" value="PomBase"/>
</dbReference>
<dbReference type="Gene3D" id="2.130.10.30">
    <property type="entry name" value="Regulator of chromosome condensation 1/beta-lactamase-inhibitor protein II"/>
    <property type="match status" value="2"/>
</dbReference>
<dbReference type="InterPro" id="IPR009091">
    <property type="entry name" value="RCC1/BLIP-II"/>
</dbReference>
<dbReference type="InterPro" id="IPR000408">
    <property type="entry name" value="Reg_chr_condens"/>
</dbReference>
<dbReference type="InterPro" id="IPR051709">
    <property type="entry name" value="Ub-ligase/GTPase-reg"/>
</dbReference>
<dbReference type="PANTHER" id="PTHR45622:SF70">
    <property type="entry name" value="SECRETION-REGULATING GUANINE NUCLEOTIDE EXCHANGE FACTOR"/>
    <property type="match status" value="1"/>
</dbReference>
<dbReference type="PANTHER" id="PTHR45622">
    <property type="entry name" value="UBIQUITIN-PROTEIN LIGASE E3A-RELATED"/>
    <property type="match status" value="1"/>
</dbReference>
<dbReference type="Pfam" id="PF25390">
    <property type="entry name" value="WD40_RLD"/>
    <property type="match status" value="1"/>
</dbReference>
<dbReference type="PRINTS" id="PR00633">
    <property type="entry name" value="RCCNDNSATION"/>
</dbReference>
<dbReference type="SUPFAM" id="SSF50985">
    <property type="entry name" value="RCC1/BLIP-II"/>
    <property type="match status" value="1"/>
</dbReference>
<dbReference type="PROSITE" id="PS00626">
    <property type="entry name" value="RCC1_2"/>
    <property type="match status" value="1"/>
</dbReference>
<dbReference type="PROSITE" id="PS50012">
    <property type="entry name" value="RCC1_3"/>
    <property type="match status" value="2"/>
</dbReference>
<keyword id="KW-0963">Cytoplasm</keyword>
<keyword id="KW-0539">Nucleus</keyword>
<keyword id="KW-1185">Reference proteome</keyword>
<keyword id="KW-0677">Repeat</keyword>